<proteinExistence type="inferred from homology"/>
<gene>
    <name type="ordered locus">lin0773</name>
</gene>
<reference key="1">
    <citation type="journal article" date="2001" name="Science">
        <title>Comparative genomics of Listeria species.</title>
        <authorList>
            <person name="Glaser P."/>
            <person name="Frangeul L."/>
            <person name="Buchrieser C."/>
            <person name="Rusniok C."/>
            <person name="Amend A."/>
            <person name="Baquero F."/>
            <person name="Berche P."/>
            <person name="Bloecker H."/>
            <person name="Brandt P."/>
            <person name="Chakraborty T."/>
            <person name="Charbit A."/>
            <person name="Chetouani F."/>
            <person name="Couve E."/>
            <person name="de Daruvar A."/>
            <person name="Dehoux P."/>
            <person name="Domann E."/>
            <person name="Dominguez-Bernal G."/>
            <person name="Duchaud E."/>
            <person name="Durant L."/>
            <person name="Dussurget O."/>
            <person name="Entian K.-D."/>
            <person name="Fsihi H."/>
            <person name="Garcia-del Portillo F."/>
            <person name="Garrido P."/>
            <person name="Gautier L."/>
            <person name="Goebel W."/>
            <person name="Gomez-Lopez N."/>
            <person name="Hain T."/>
            <person name="Hauf J."/>
            <person name="Jackson D."/>
            <person name="Jones L.-M."/>
            <person name="Kaerst U."/>
            <person name="Kreft J."/>
            <person name="Kuhn M."/>
            <person name="Kunst F."/>
            <person name="Kurapkat G."/>
            <person name="Madueno E."/>
            <person name="Maitournam A."/>
            <person name="Mata Vicente J."/>
            <person name="Ng E."/>
            <person name="Nedjari H."/>
            <person name="Nordsiek G."/>
            <person name="Novella S."/>
            <person name="de Pablos B."/>
            <person name="Perez-Diaz J.-C."/>
            <person name="Purcell R."/>
            <person name="Remmel B."/>
            <person name="Rose M."/>
            <person name="Schlueter T."/>
            <person name="Simoes N."/>
            <person name="Tierrez A."/>
            <person name="Vazquez-Boland J.-A."/>
            <person name="Voss H."/>
            <person name="Wehland J."/>
            <person name="Cossart P."/>
        </authorList>
    </citation>
    <scope>NUCLEOTIDE SEQUENCE [LARGE SCALE GENOMIC DNA]</scope>
    <source>
        <strain>ATCC BAA-680 / CLIP 11262</strain>
    </source>
</reference>
<organism>
    <name type="scientific">Listeria innocua serovar 6a (strain ATCC BAA-680 / CLIP 11262)</name>
    <dbReference type="NCBI Taxonomy" id="272626"/>
    <lineage>
        <taxon>Bacteria</taxon>
        <taxon>Bacillati</taxon>
        <taxon>Bacillota</taxon>
        <taxon>Bacilli</taxon>
        <taxon>Bacillales</taxon>
        <taxon>Listeriaceae</taxon>
        <taxon>Listeria</taxon>
    </lineage>
</organism>
<keyword id="KW-1003">Cell membrane</keyword>
<keyword id="KW-0472">Membrane</keyword>
<keyword id="KW-0812">Transmembrane</keyword>
<keyword id="KW-1133">Transmembrane helix</keyword>
<feature type="chain" id="PRO_0000218115" description="UPF0266 membrane protein lin0773">
    <location>
        <begin position="1"/>
        <end position="155"/>
    </location>
</feature>
<feature type="transmembrane region" description="Helical" evidence="1">
    <location>
        <begin position="8"/>
        <end position="28"/>
    </location>
</feature>
<feature type="transmembrane region" description="Helical" evidence="1">
    <location>
        <begin position="46"/>
        <end position="66"/>
    </location>
</feature>
<feature type="transmembrane region" description="Helical" evidence="1">
    <location>
        <begin position="70"/>
        <end position="90"/>
    </location>
</feature>
<accession>Q92DP0</accession>
<dbReference type="EMBL" id="AL596166">
    <property type="protein sequence ID" value="CAC96005.1"/>
    <property type="molecule type" value="Genomic_DNA"/>
</dbReference>
<dbReference type="PIR" id="AE1529">
    <property type="entry name" value="AE1529"/>
</dbReference>
<dbReference type="RefSeq" id="WP_003761105.1">
    <property type="nucleotide sequence ID" value="NC_003212.1"/>
</dbReference>
<dbReference type="STRING" id="272626.gene:17565100"/>
<dbReference type="KEGG" id="lin:lin0773"/>
<dbReference type="eggNOG" id="COG4811">
    <property type="taxonomic scope" value="Bacteria"/>
</dbReference>
<dbReference type="HOGENOM" id="CLU_133645_0_0_9"/>
<dbReference type="OrthoDB" id="2360740at2"/>
<dbReference type="Proteomes" id="UP000002513">
    <property type="component" value="Chromosome"/>
</dbReference>
<dbReference type="GO" id="GO:0005886">
    <property type="term" value="C:plasma membrane"/>
    <property type="evidence" value="ECO:0007669"/>
    <property type="project" value="UniProtKB-SubCell"/>
</dbReference>
<dbReference type="HAMAP" id="MF_01071">
    <property type="entry name" value="UPF0266"/>
    <property type="match status" value="1"/>
</dbReference>
<dbReference type="InterPro" id="IPR009328">
    <property type="entry name" value="DUF986"/>
</dbReference>
<dbReference type="NCBIfam" id="NF002791">
    <property type="entry name" value="PRK02913.1"/>
    <property type="match status" value="1"/>
</dbReference>
<dbReference type="Pfam" id="PF06173">
    <property type="entry name" value="DUF986"/>
    <property type="match status" value="1"/>
</dbReference>
<dbReference type="PIRSF" id="PIRSF020687">
    <property type="entry name" value="UCP020687"/>
    <property type="match status" value="1"/>
</dbReference>
<protein>
    <recommendedName>
        <fullName evidence="1">UPF0266 membrane protein lin0773</fullName>
    </recommendedName>
</protein>
<name>Y773_LISIN</name>
<evidence type="ECO:0000255" key="1">
    <source>
        <dbReference type="HAMAP-Rule" id="MF_01071"/>
    </source>
</evidence>
<comment type="subcellular location">
    <subcellularLocation>
        <location evidence="1">Cell membrane</location>
        <topology evidence="1">Multi-pass membrane protein</topology>
    </subcellularLocation>
</comment>
<comment type="similarity">
    <text evidence="1">Belongs to the UPF0266 family.</text>
</comment>
<sequence>MVWDATNIFLFIANILTLLYILYNDAVIPLSKGKTVLSVKLRSRGRWDGYIFVGIIVLLFVSNTFFREGPFSTSVLLAVMGVLFIYICFFRSSKAVFKETGLYYALLFFPYAKIERMNLSEDGVLVIETNRQRLMLFARSEKDLEKMLAVFTTYS</sequence>